<organismHost>
    <name type="scientific">Rattus</name>
    <dbReference type="NCBI Taxonomy" id="10114"/>
</organismHost>
<organism>
    <name type="scientific">Rat cytomegalovirus (strain Maastricht)</name>
    <dbReference type="NCBI Taxonomy" id="79700"/>
    <lineage>
        <taxon>Viruses</taxon>
        <taxon>Duplodnaviria</taxon>
        <taxon>Heunggongvirae</taxon>
        <taxon>Peploviricota</taxon>
        <taxon>Herviviricetes</taxon>
        <taxon>Herpesvirales</taxon>
        <taxon>Orthoherpesviridae</taxon>
        <taxon>Betaherpesvirinae</taxon>
        <taxon>Muromegalovirus</taxon>
        <taxon>Muromegalovirus muridbeta2</taxon>
        <taxon>Murid betaherpesvirus 2</taxon>
    </lineage>
</organism>
<protein>
    <recommendedName>
        <fullName>DNA polymerase catalytic subunit</fullName>
        <ecNumber>2.7.7.7</ecNumber>
    </recommendedName>
</protein>
<gene>
    <name type="primary">UL54</name>
</gene>
<reference key="1">
    <citation type="journal article" date="1996" name="J. Gen. Virol.">
        <title>Cloning and sequence analysis of the genes encoding DNA polymerase, glycoprotein B, ICP18.5 and major DNA-binding protein of rat cytomegalovirus.</title>
        <authorList>
            <person name="Beuken E."/>
            <person name="Slobbe R."/>
            <person name="Bruggeman C.A."/>
            <person name="Vink C."/>
        </authorList>
    </citation>
    <scope>NUCLEOTIDE SEQUENCE [GENOMIC DNA]</scope>
</reference>
<reference key="2">
    <citation type="journal article" date="2000" name="J. Virol.">
        <title>Complete DNA sequence of the rat cytomegalovirus genome.</title>
        <authorList>
            <person name="Vink C."/>
            <person name="Beuken E."/>
            <person name="Bruggeman C.A."/>
        </authorList>
    </citation>
    <scope>NUCLEOTIDE SEQUENCE [GENOMIC DNA]</scope>
    <scope>SEQUENCE REVISION</scope>
</reference>
<accession>Q85428</accession>
<feature type="chain" id="PRO_0000046509" description="DNA polymerase catalytic subunit">
    <location>
        <begin position="1"/>
        <end position="1173"/>
    </location>
</feature>
<feature type="region of interest" description="Disordered" evidence="1">
    <location>
        <begin position="554"/>
        <end position="625"/>
    </location>
</feature>
<feature type="region of interest" description="Disordered" evidence="1">
    <location>
        <begin position="1123"/>
        <end position="1144"/>
    </location>
</feature>
<feature type="compositionally biased region" description="Gly residues" evidence="1">
    <location>
        <begin position="564"/>
        <end position="578"/>
    </location>
</feature>
<feature type="compositionally biased region" description="Acidic residues" evidence="1">
    <location>
        <begin position="591"/>
        <end position="606"/>
    </location>
</feature>
<feature type="compositionally biased region" description="Basic and acidic residues" evidence="1">
    <location>
        <begin position="607"/>
        <end position="618"/>
    </location>
</feature>
<feature type="compositionally biased region" description="Gly residues" evidence="1">
    <location>
        <begin position="1123"/>
        <end position="1138"/>
    </location>
</feature>
<evidence type="ECO:0000256" key="1">
    <source>
        <dbReference type="SAM" id="MobiDB-lite"/>
    </source>
</evidence>
<evidence type="ECO:0000305" key="2"/>
<sequence>MDAEIFFNPYLHTKRSRRDWRAEPAADNKESFLQIVPRGVLYDGATGLIKTQCELSPRMFFEDREYVLDPVMVWPGLDIAADGEAVPPCDFVFHTFDQVVSLVFAEGRGRARRWRQHISPAGNVIRLFGATALGTPVCVNVFGQKSYFYCENRPGEDLRDVIHDLADASRSPGPLSASPSRRAPLVAVRLRPGDIPHLYRVSFNNWSMARKVGALMVQEGRRAYEIGVDPLARFLIDRKIPSFGWLRVGRFSRRCNGQTSTAVIELDCQVGDVVAGQPLPNWPPYRCLSFDIECMSASGAFPQAEVLDDIVIQISCVCFVVGGSGAHRFTFAEKHLFTIGSCAPVEDVWVYTFPSEYEMLLGFFIFFNRFSPDFLTGYNINGFDIKYLLHRMCRVYQKDAGRFTKLRRGGRFFVNSPDGSGDAFGGRSGVIKVFCAGTVVLDMYPVCSAKTSAPNYKLDTMAERYLGQRKEDLSYKEIPVAFLGGEEGRARVGKYCVQDGARQGPLNVIAYHYEAAASPNLARIPLRRVIFDGQQIRIYTCILEECSARGMVLPSLPSSPPSSGGDGAGLEGGDGGTAGRRKKKRSGSAPDGEDEDDPEGGDEGENGECRENGLEKEGSQGSASGNVGYQGATVLAPECGYHHNPILVFDFASLYPSIIMSNNLCYSTLLVDGSPPVPDEDVLEVVVGEATRYRFVREHVRRSLLAELLVRWLKQRKLVRDAMKACGDEKQRMFMDKQQLALKVTCNAFYGFTGVAAPMLPCLPIAASITKIGRDMLLATSAYMERHCNDVEFLVSEVGVPREAVDRDALRVKIVYGDTDSVFVGFRGIGREVLVKVAGKLAAAVTRDLFRDPVRLEFEKMFVSLMMICKKRYIGKVYGENKLCMKGVDLVRRHACAFVRSIVSEVVDVIFHDEAVSEGAMRLSEMSFEELRRQGVPVGFFPVIRRLCDARDDLFLDRVPVAQLVLSSVLSQDASRYKQKNLPHLAVYRSLVERGEELPGVGDRIEYVLTCPDESKKRAPNYEVAEDPAHVREAKIPIHAEKYFDQIVKAVTNVLLPVFPKDMPRRERFFAYVLPIRTYLPEVFLRMSKEDRECGAYLARESGLGMNSFIVYGEDTCGSRVGEGPGRGEGLGVGGGEGTRPPRKNGHARLVSGCLYGSRPFNKKDRFVTLHIE</sequence>
<keyword id="KW-0235">DNA replication</keyword>
<keyword id="KW-0238">DNA-binding</keyword>
<keyword id="KW-0239">DNA-directed DNA polymerase</keyword>
<keyword id="KW-1048">Host nucleus</keyword>
<keyword id="KW-0548">Nucleotidyltransferase</keyword>
<keyword id="KW-1185">Reference proteome</keyword>
<keyword id="KW-0808">Transferase</keyword>
<keyword id="KW-1194">Viral DNA replication</keyword>
<proteinExistence type="inferred from homology"/>
<dbReference type="EC" id="2.7.7.7"/>
<dbReference type="EMBL" id="AF232689">
    <property type="protein sequence ID" value="AAF99153.1"/>
    <property type="molecule type" value="Genomic_DNA"/>
</dbReference>
<dbReference type="SMR" id="Q85428"/>
<dbReference type="KEGG" id="vg:940420"/>
<dbReference type="OrthoDB" id="165at10239"/>
<dbReference type="Proteomes" id="UP000008288">
    <property type="component" value="Genome"/>
</dbReference>
<dbReference type="GO" id="GO:0042025">
    <property type="term" value="C:host cell nucleus"/>
    <property type="evidence" value="ECO:0007669"/>
    <property type="project" value="UniProtKB-SubCell"/>
</dbReference>
<dbReference type="GO" id="GO:0003677">
    <property type="term" value="F:DNA binding"/>
    <property type="evidence" value="ECO:0007669"/>
    <property type="project" value="UniProtKB-KW"/>
</dbReference>
<dbReference type="GO" id="GO:0003887">
    <property type="term" value="F:DNA-directed DNA polymerase activity"/>
    <property type="evidence" value="ECO:0007669"/>
    <property type="project" value="UniProtKB-KW"/>
</dbReference>
<dbReference type="GO" id="GO:0000166">
    <property type="term" value="F:nucleotide binding"/>
    <property type="evidence" value="ECO:0007669"/>
    <property type="project" value="InterPro"/>
</dbReference>
<dbReference type="GO" id="GO:0006261">
    <property type="term" value="P:DNA-templated DNA replication"/>
    <property type="evidence" value="ECO:0007669"/>
    <property type="project" value="TreeGrafter"/>
</dbReference>
<dbReference type="GO" id="GO:0039693">
    <property type="term" value="P:viral DNA genome replication"/>
    <property type="evidence" value="ECO:0007669"/>
    <property type="project" value="UniProtKB-KW"/>
</dbReference>
<dbReference type="Gene3D" id="1.10.132.60">
    <property type="entry name" value="DNA polymerase family B, C-terminal domain"/>
    <property type="match status" value="1"/>
</dbReference>
<dbReference type="Gene3D" id="3.30.342.10">
    <property type="entry name" value="DNA Polymerase, chain B, domain 1"/>
    <property type="match status" value="1"/>
</dbReference>
<dbReference type="Gene3D" id="1.10.287.690">
    <property type="entry name" value="Helix hairpin bin"/>
    <property type="match status" value="1"/>
</dbReference>
<dbReference type="Gene3D" id="3.90.1600.10">
    <property type="entry name" value="Palm domain of DNA polymerase"/>
    <property type="match status" value="1"/>
</dbReference>
<dbReference type="Gene3D" id="3.30.420.10">
    <property type="entry name" value="Ribonuclease H-like superfamily/Ribonuclease H"/>
    <property type="match status" value="1"/>
</dbReference>
<dbReference type="InterPro" id="IPR006172">
    <property type="entry name" value="DNA-dir_DNA_pol_B"/>
</dbReference>
<dbReference type="InterPro" id="IPR017964">
    <property type="entry name" value="DNA-dir_DNA_pol_B_CS"/>
</dbReference>
<dbReference type="InterPro" id="IPR006133">
    <property type="entry name" value="DNA-dir_DNA_pol_B_exonuc"/>
</dbReference>
<dbReference type="InterPro" id="IPR006134">
    <property type="entry name" value="DNA-dir_DNA_pol_B_multi_dom"/>
</dbReference>
<dbReference type="InterPro" id="IPR043502">
    <property type="entry name" value="DNA/RNA_pol_sf"/>
</dbReference>
<dbReference type="InterPro" id="IPR042087">
    <property type="entry name" value="DNA_pol_B_thumb"/>
</dbReference>
<dbReference type="InterPro" id="IPR023211">
    <property type="entry name" value="DNA_pol_palm_dom_sf"/>
</dbReference>
<dbReference type="InterPro" id="IPR050240">
    <property type="entry name" value="DNA_pol_type-B"/>
</dbReference>
<dbReference type="InterPro" id="IPR012337">
    <property type="entry name" value="RNaseH-like_sf"/>
</dbReference>
<dbReference type="InterPro" id="IPR036397">
    <property type="entry name" value="RNaseH_sf"/>
</dbReference>
<dbReference type="PANTHER" id="PTHR10322">
    <property type="entry name" value="DNA POLYMERASE CATALYTIC SUBUNIT"/>
    <property type="match status" value="1"/>
</dbReference>
<dbReference type="PANTHER" id="PTHR10322:SF23">
    <property type="entry name" value="DNA POLYMERASE DELTA CATALYTIC SUBUNIT"/>
    <property type="match status" value="1"/>
</dbReference>
<dbReference type="Pfam" id="PF00136">
    <property type="entry name" value="DNA_pol_B"/>
    <property type="match status" value="1"/>
</dbReference>
<dbReference type="Pfam" id="PF03104">
    <property type="entry name" value="DNA_pol_B_exo1"/>
    <property type="match status" value="1"/>
</dbReference>
<dbReference type="PRINTS" id="PR00106">
    <property type="entry name" value="DNAPOLB"/>
</dbReference>
<dbReference type="SMART" id="SM00486">
    <property type="entry name" value="POLBc"/>
    <property type="match status" value="1"/>
</dbReference>
<dbReference type="SUPFAM" id="SSF56672">
    <property type="entry name" value="DNA/RNA polymerases"/>
    <property type="match status" value="1"/>
</dbReference>
<dbReference type="SUPFAM" id="SSF53098">
    <property type="entry name" value="Ribonuclease H-like"/>
    <property type="match status" value="1"/>
</dbReference>
<dbReference type="PROSITE" id="PS00116">
    <property type="entry name" value="DNA_POLYMERASE_B"/>
    <property type="match status" value="1"/>
</dbReference>
<name>DPOL_RCMVM</name>
<comment type="catalytic activity">
    <reaction>
        <text>DNA(n) + a 2'-deoxyribonucleoside 5'-triphosphate = DNA(n+1) + diphosphate</text>
        <dbReference type="Rhea" id="RHEA:22508"/>
        <dbReference type="Rhea" id="RHEA-COMP:17339"/>
        <dbReference type="Rhea" id="RHEA-COMP:17340"/>
        <dbReference type="ChEBI" id="CHEBI:33019"/>
        <dbReference type="ChEBI" id="CHEBI:61560"/>
        <dbReference type="ChEBI" id="CHEBI:173112"/>
        <dbReference type="EC" id="2.7.7.7"/>
    </reaction>
</comment>
<comment type="subcellular location">
    <subcellularLocation>
        <location>Host nucleus</location>
    </subcellularLocation>
</comment>
<comment type="similarity">
    <text evidence="2">Belongs to the DNA polymerase type-B family.</text>
</comment>